<protein>
    <recommendedName>
        <fullName evidence="1">ATP synthase subunit delta</fullName>
    </recommendedName>
    <alternativeName>
        <fullName evidence="1">ATP synthase F(1) sector subunit delta</fullName>
    </alternativeName>
    <alternativeName>
        <fullName evidence="1">F-type ATPase subunit delta</fullName>
        <shortName evidence="1">F-ATPase subunit delta</shortName>
    </alternativeName>
</protein>
<comment type="function">
    <text evidence="1">F(1)F(0) ATP synthase produces ATP from ADP in the presence of a proton or sodium gradient. F-type ATPases consist of two structural domains, F(1) containing the extramembraneous catalytic core and F(0) containing the membrane proton channel, linked together by a central stalk and a peripheral stalk. During catalysis, ATP synthesis in the catalytic domain of F(1) is coupled via a rotary mechanism of the central stalk subunits to proton translocation.</text>
</comment>
<comment type="function">
    <text evidence="1">This protein is part of the stalk that links CF(0) to CF(1). It either transmits conformational changes from CF(0) to CF(1) or is implicated in proton conduction.</text>
</comment>
<comment type="subunit">
    <text evidence="1">F-type ATPases have 2 components, F(1) - the catalytic core - and F(0) - the membrane proton channel. F(1) has five subunits: alpha(3), beta(3), gamma(1), delta(1), epsilon(1). F(0) has three main subunits: a(1), b(2) and c(10-14). The alpha and beta chains form an alternating ring which encloses part of the gamma chain. F(1) is attached to F(0) by a central stalk formed by the gamma and epsilon chains, while a peripheral stalk is formed by the delta and b chains.</text>
</comment>
<comment type="subcellular location">
    <subcellularLocation>
        <location evidence="1">Cell inner membrane</location>
        <topology evidence="1">Peripheral membrane protein</topology>
    </subcellularLocation>
</comment>
<comment type="similarity">
    <text evidence="1">Belongs to the ATPase delta chain family.</text>
</comment>
<comment type="sequence caution" evidence="2">
    <conflict type="erroneous initiation">
        <sequence resource="EMBL-CDS" id="ABC84114"/>
    </conflict>
</comment>
<dbReference type="EMBL" id="CP000251">
    <property type="protein sequence ID" value="ABC84114.1"/>
    <property type="status" value="ALT_INIT"/>
    <property type="molecule type" value="Genomic_DNA"/>
</dbReference>
<dbReference type="RefSeq" id="WP_041453782.1">
    <property type="nucleotide sequence ID" value="NC_007760.1"/>
</dbReference>
<dbReference type="SMR" id="Q2IHQ8"/>
<dbReference type="STRING" id="290397.Adeh_4351"/>
<dbReference type="KEGG" id="ade:Adeh_4351"/>
<dbReference type="eggNOG" id="COG0712">
    <property type="taxonomic scope" value="Bacteria"/>
</dbReference>
<dbReference type="HOGENOM" id="CLU_085114_1_1_7"/>
<dbReference type="OrthoDB" id="9802471at2"/>
<dbReference type="Proteomes" id="UP000001935">
    <property type="component" value="Chromosome"/>
</dbReference>
<dbReference type="GO" id="GO:0005886">
    <property type="term" value="C:plasma membrane"/>
    <property type="evidence" value="ECO:0007669"/>
    <property type="project" value="UniProtKB-SubCell"/>
</dbReference>
<dbReference type="GO" id="GO:0045259">
    <property type="term" value="C:proton-transporting ATP synthase complex"/>
    <property type="evidence" value="ECO:0007669"/>
    <property type="project" value="UniProtKB-KW"/>
</dbReference>
<dbReference type="GO" id="GO:0046933">
    <property type="term" value="F:proton-transporting ATP synthase activity, rotational mechanism"/>
    <property type="evidence" value="ECO:0007669"/>
    <property type="project" value="UniProtKB-UniRule"/>
</dbReference>
<dbReference type="Gene3D" id="1.10.520.20">
    <property type="entry name" value="N-terminal domain of the delta subunit of the F1F0-ATP synthase"/>
    <property type="match status" value="1"/>
</dbReference>
<dbReference type="HAMAP" id="MF_01416">
    <property type="entry name" value="ATP_synth_delta_bact"/>
    <property type="match status" value="1"/>
</dbReference>
<dbReference type="InterPro" id="IPR026015">
    <property type="entry name" value="ATP_synth_OSCP/delta_N_sf"/>
</dbReference>
<dbReference type="InterPro" id="IPR000711">
    <property type="entry name" value="ATPase_OSCP/dsu"/>
</dbReference>
<dbReference type="NCBIfam" id="TIGR01145">
    <property type="entry name" value="ATP_synt_delta"/>
    <property type="match status" value="1"/>
</dbReference>
<dbReference type="NCBIfam" id="NF004402">
    <property type="entry name" value="PRK05758.2-2"/>
    <property type="match status" value="1"/>
</dbReference>
<dbReference type="PANTHER" id="PTHR11910">
    <property type="entry name" value="ATP SYNTHASE DELTA CHAIN"/>
    <property type="match status" value="1"/>
</dbReference>
<dbReference type="Pfam" id="PF00213">
    <property type="entry name" value="OSCP"/>
    <property type="match status" value="1"/>
</dbReference>
<dbReference type="PRINTS" id="PR00125">
    <property type="entry name" value="ATPASEDELTA"/>
</dbReference>
<dbReference type="SUPFAM" id="SSF47928">
    <property type="entry name" value="N-terminal domain of the delta subunit of the F1F0-ATP synthase"/>
    <property type="match status" value="1"/>
</dbReference>
<keyword id="KW-0066">ATP synthesis</keyword>
<keyword id="KW-0997">Cell inner membrane</keyword>
<keyword id="KW-1003">Cell membrane</keyword>
<keyword id="KW-0139">CF(1)</keyword>
<keyword id="KW-0375">Hydrogen ion transport</keyword>
<keyword id="KW-0406">Ion transport</keyword>
<keyword id="KW-0472">Membrane</keyword>
<keyword id="KW-1185">Reference proteome</keyword>
<keyword id="KW-0813">Transport</keyword>
<gene>
    <name evidence="1" type="primary">atpH</name>
    <name type="ordered locus">Adeh_4351</name>
</gene>
<organism>
    <name type="scientific">Anaeromyxobacter dehalogenans (strain 2CP-C)</name>
    <dbReference type="NCBI Taxonomy" id="290397"/>
    <lineage>
        <taxon>Bacteria</taxon>
        <taxon>Pseudomonadati</taxon>
        <taxon>Myxococcota</taxon>
        <taxon>Myxococcia</taxon>
        <taxon>Myxococcales</taxon>
        <taxon>Cystobacterineae</taxon>
        <taxon>Anaeromyxobacteraceae</taxon>
        <taxon>Anaeromyxobacter</taxon>
    </lineage>
</organism>
<accession>Q2IHQ8</accession>
<sequence>MLMGSIARRYARALFSLAVEQGRVEPWNDALQVLKNAVEGSPDLRDVLSNPVYSKEQRRAIVEKLASALKLEREPANLLFLLGDRNRLAYLPAVVDTFRALADQHLGRLRARVTSAVPLDAQAAQAIADRLSQATKATVLLDRAVDPALLGGVVAQVGSLVYDGSLRTQLEDLRKTLKQ</sequence>
<proteinExistence type="inferred from homology"/>
<feature type="chain" id="PRO_0000382051" description="ATP synthase subunit delta">
    <location>
        <begin position="1"/>
        <end position="179"/>
    </location>
</feature>
<reference key="1">
    <citation type="submission" date="2006-01" db="EMBL/GenBank/DDBJ databases">
        <title>Complete sequence of Anaeromyxobacter dehalogenans 2CP-C.</title>
        <authorList>
            <person name="Copeland A."/>
            <person name="Lucas S."/>
            <person name="Lapidus A."/>
            <person name="Barry K."/>
            <person name="Detter J.C."/>
            <person name="Glavina T."/>
            <person name="Hammon N."/>
            <person name="Israni S."/>
            <person name="Pitluck S."/>
            <person name="Brettin T."/>
            <person name="Bruce D."/>
            <person name="Han C."/>
            <person name="Tapia R."/>
            <person name="Gilna P."/>
            <person name="Kiss H."/>
            <person name="Schmutz J."/>
            <person name="Larimer F."/>
            <person name="Land M."/>
            <person name="Kyrpides N."/>
            <person name="Anderson I."/>
            <person name="Sanford R.A."/>
            <person name="Ritalahti K.M."/>
            <person name="Thomas H.S."/>
            <person name="Kirby J.R."/>
            <person name="Zhulin I.B."/>
            <person name="Loeffler F.E."/>
            <person name="Richardson P."/>
        </authorList>
    </citation>
    <scope>NUCLEOTIDE SEQUENCE [LARGE SCALE GENOMIC DNA]</scope>
    <source>
        <strain>2CP-C</strain>
    </source>
</reference>
<name>ATPD_ANADE</name>
<evidence type="ECO:0000255" key="1">
    <source>
        <dbReference type="HAMAP-Rule" id="MF_01416"/>
    </source>
</evidence>
<evidence type="ECO:0000305" key="2"/>